<reference key="1">
    <citation type="submission" date="2001-07" db="EMBL/GenBank/DDBJ databases">
        <title>Genome-wide discovery and analysis of human seven transmembrane helix receptor genes.</title>
        <authorList>
            <person name="Suwa M."/>
            <person name="Sato T."/>
            <person name="Okouchi I."/>
            <person name="Arita M."/>
            <person name="Futami K."/>
            <person name="Matsumoto S."/>
            <person name="Tsutsumi S."/>
            <person name="Aburatani H."/>
            <person name="Asai K."/>
            <person name="Akiyama Y."/>
        </authorList>
    </citation>
    <scope>NUCLEOTIDE SEQUENCE [GENOMIC DNA]</scope>
    <scope>VARIANT ARG-221</scope>
</reference>
<reference key="2">
    <citation type="journal article" date="2002" name="Genomics">
        <title>DEFOG: a practical scheme for deciphering families of genes.</title>
        <authorList>
            <person name="Fuchs T."/>
            <person name="Malecova B."/>
            <person name="Linhart C."/>
            <person name="Sharan R."/>
            <person name="Khen M."/>
            <person name="Herwig R."/>
            <person name="Shmulevich D."/>
            <person name="Elkon R."/>
            <person name="Steinfath M."/>
            <person name="O'Brien J.K."/>
            <person name="Radelof U."/>
            <person name="Lehrach H."/>
            <person name="Lancet D."/>
            <person name="Shamir R."/>
        </authorList>
    </citation>
    <scope>NUCLEOTIDE SEQUENCE [GENOMIC DNA] OF 69-284</scope>
</reference>
<reference key="3">
    <citation type="journal article" date="2004" name="Proc. Natl. Acad. Sci. U.S.A.">
        <title>The human olfactory receptor gene family.</title>
        <authorList>
            <person name="Malnic B."/>
            <person name="Godfrey P.A."/>
            <person name="Buck L.B."/>
        </authorList>
    </citation>
    <scope>IDENTIFICATION</scope>
</reference>
<reference key="4">
    <citation type="journal article" date="2004" name="Proc. Natl. Acad. Sci. U.S.A.">
        <authorList>
            <person name="Malnic B."/>
            <person name="Godfrey P.A."/>
            <person name="Buck L.B."/>
        </authorList>
    </citation>
    <scope>ERRATUM OF PUBMED:14983052</scope>
</reference>
<sequence length="315" mass="35339">METWVNQSYTDGFFLLGIFSHSTADLVLFSVVMAVFTVALCGNVLLIFLIYMDPHLHTPMYFFLSQLSLMDLMLVCTNVPKMAANFLSGRKSISFVGCGIQIGLFVCLVGSEGLLLGLMAYDRYVAISHPLHYPILMNQRVCLQITGSSWAFGIIDGLIQMVVVMNFPYCGLRKVNHFFCEMLSLLKLACVDTSLFEKVIFACCVFMLLFPFSIIVASYAHILGTVLQMHSAQAWKKALATCSSHLTAVTLFYGAAMFIYLRPRHYRAPSHDKVASIFYTVLTPMLNPLIYSLRNREVMGALRKGLDRCRIGSQH</sequence>
<comment type="function">
    <text evidence="4">Odorant receptor.</text>
</comment>
<comment type="subcellular location">
    <subcellularLocation>
        <location>Cell membrane</location>
        <topology>Multi-pass membrane protein</topology>
    </subcellularLocation>
</comment>
<comment type="similarity">
    <text evidence="2">Belongs to the G-protein coupled receptor 1 family.</text>
</comment>
<comment type="online information" name="Human Olfactory Receptor Data Exploratorium (HORDE)">
    <link uri="http://genome.weizmann.ac.il/horde/card/index/symbol:OR2V2"/>
</comment>
<protein>
    <recommendedName>
        <fullName>Olfactory receptor 2V2</fullName>
    </recommendedName>
    <alternativeName>
        <fullName>Olfactory receptor 2V3</fullName>
    </alternativeName>
    <alternativeName>
        <fullName>Olfactory receptor OR5-3</fullName>
    </alternativeName>
</protein>
<dbReference type="EMBL" id="AB065675">
    <property type="protein sequence ID" value="BAC05900.1"/>
    <property type="molecule type" value="Genomic_DNA"/>
</dbReference>
<dbReference type="EMBL" id="AF399614">
    <property type="protein sequence ID" value="AAK95099.1"/>
    <property type="molecule type" value="Genomic_DNA"/>
</dbReference>
<dbReference type="EMBL" id="BK004246">
    <property type="protein sequence ID" value="DAA04644.1"/>
    <property type="molecule type" value="Genomic_DNA"/>
</dbReference>
<dbReference type="CCDS" id="CCDS4461.1"/>
<dbReference type="RefSeq" id="NP_996763.1">
    <property type="nucleotide sequence ID" value="NM_206880.2"/>
</dbReference>
<dbReference type="SMR" id="Q96R30"/>
<dbReference type="FunCoup" id="Q96R30">
    <property type="interactions" value="556"/>
</dbReference>
<dbReference type="STRING" id="9606.ENSP00000493207"/>
<dbReference type="GlyCosmos" id="Q96R30">
    <property type="glycosylation" value="1 site, No reported glycans"/>
</dbReference>
<dbReference type="GlyGen" id="Q96R30">
    <property type="glycosylation" value="1 site"/>
</dbReference>
<dbReference type="iPTMnet" id="Q96R30"/>
<dbReference type="PhosphoSitePlus" id="Q96R30"/>
<dbReference type="BioMuta" id="OR2V2"/>
<dbReference type="DMDM" id="55977873"/>
<dbReference type="MassIVE" id="Q96R30"/>
<dbReference type="PaxDb" id="9606-ENSP00000332185"/>
<dbReference type="Antibodypedia" id="62268">
    <property type="antibodies" value="70 antibodies from 19 providers"/>
</dbReference>
<dbReference type="DNASU" id="285659"/>
<dbReference type="Ensembl" id="ENST00000641492.1">
    <property type="protein sequence ID" value="ENSP00000493207.1"/>
    <property type="gene ID" value="ENSG00000182613.3"/>
</dbReference>
<dbReference type="Ensembl" id="ENST00000641791.1">
    <property type="protein sequence ID" value="ENSP00000493017.1"/>
    <property type="gene ID" value="ENSG00000182613.3"/>
</dbReference>
<dbReference type="GeneID" id="285659"/>
<dbReference type="KEGG" id="hsa:285659"/>
<dbReference type="MANE-Select" id="ENST00000641492.1">
    <property type="protein sequence ID" value="ENSP00000493207.1"/>
    <property type="RefSeq nucleotide sequence ID" value="NM_206880.2"/>
    <property type="RefSeq protein sequence ID" value="NP_996763.1"/>
</dbReference>
<dbReference type="UCSC" id="uc011dhj.2">
    <property type="organism name" value="human"/>
</dbReference>
<dbReference type="AGR" id="HGNC:15341"/>
<dbReference type="CTD" id="285659"/>
<dbReference type="DisGeNET" id="285659"/>
<dbReference type="GeneCards" id="OR2V2"/>
<dbReference type="HGNC" id="HGNC:15341">
    <property type="gene designation" value="OR2V2"/>
</dbReference>
<dbReference type="HPA" id="ENSG00000182613">
    <property type="expression patterns" value="Not detected"/>
</dbReference>
<dbReference type="neXtProt" id="NX_Q96R30"/>
<dbReference type="OpenTargets" id="ENSG00000182613"/>
<dbReference type="PharmGKB" id="PA32212"/>
<dbReference type="VEuPathDB" id="HostDB:ENSG00000182613"/>
<dbReference type="eggNOG" id="ENOG502SHXQ">
    <property type="taxonomic scope" value="Eukaryota"/>
</dbReference>
<dbReference type="GeneTree" id="ENSGT01130000278260"/>
<dbReference type="HOGENOM" id="CLU_012526_1_2_1"/>
<dbReference type="InParanoid" id="Q96R30"/>
<dbReference type="OMA" id="FPYCDLR"/>
<dbReference type="OrthoDB" id="9824700at2759"/>
<dbReference type="PAN-GO" id="Q96R30">
    <property type="GO annotations" value="0 GO annotations based on evolutionary models"/>
</dbReference>
<dbReference type="PhylomeDB" id="Q96R30"/>
<dbReference type="TreeFam" id="TF337295"/>
<dbReference type="PathwayCommons" id="Q96R30"/>
<dbReference type="Reactome" id="R-HSA-9752946">
    <property type="pathway name" value="Expression and translocation of olfactory receptors"/>
</dbReference>
<dbReference type="BioGRID-ORCS" id="285659">
    <property type="hits" value="10 hits in 750 CRISPR screens"/>
</dbReference>
<dbReference type="GeneWiki" id="OR2V2"/>
<dbReference type="GenomeRNAi" id="285659"/>
<dbReference type="Pharos" id="Q96R30">
    <property type="development level" value="Tdark"/>
</dbReference>
<dbReference type="PRO" id="PR:Q96R30"/>
<dbReference type="Proteomes" id="UP000005640">
    <property type="component" value="Chromosome 5"/>
</dbReference>
<dbReference type="RNAct" id="Q96R30">
    <property type="molecule type" value="protein"/>
</dbReference>
<dbReference type="Bgee" id="ENSG00000182613">
    <property type="expression patterns" value="Expressed in right uterine tube"/>
</dbReference>
<dbReference type="GO" id="GO:0005886">
    <property type="term" value="C:plasma membrane"/>
    <property type="evidence" value="ECO:0000318"/>
    <property type="project" value="GO_Central"/>
</dbReference>
<dbReference type="GO" id="GO:0004930">
    <property type="term" value="F:G protein-coupled receptor activity"/>
    <property type="evidence" value="ECO:0007669"/>
    <property type="project" value="UniProtKB-KW"/>
</dbReference>
<dbReference type="GO" id="GO:0004984">
    <property type="term" value="F:olfactory receptor activity"/>
    <property type="evidence" value="ECO:0000318"/>
    <property type="project" value="GO_Central"/>
</dbReference>
<dbReference type="GO" id="GO:0050911">
    <property type="term" value="P:detection of chemical stimulus involved in sensory perception of smell"/>
    <property type="evidence" value="ECO:0000318"/>
    <property type="project" value="GO_Central"/>
</dbReference>
<dbReference type="CDD" id="cd15421">
    <property type="entry name" value="7tmA_OR2T-like"/>
    <property type="match status" value="1"/>
</dbReference>
<dbReference type="FunFam" id="1.20.1070.10:FF:000008">
    <property type="entry name" value="Olfactory receptor"/>
    <property type="match status" value="1"/>
</dbReference>
<dbReference type="Gene3D" id="1.20.1070.10">
    <property type="entry name" value="Rhodopsin 7-helix transmembrane proteins"/>
    <property type="match status" value="1"/>
</dbReference>
<dbReference type="InterPro" id="IPR000276">
    <property type="entry name" value="GPCR_Rhodpsn"/>
</dbReference>
<dbReference type="InterPro" id="IPR017452">
    <property type="entry name" value="GPCR_Rhodpsn_7TM"/>
</dbReference>
<dbReference type="InterPro" id="IPR000725">
    <property type="entry name" value="Olfact_rcpt"/>
</dbReference>
<dbReference type="PANTHER" id="PTHR26453">
    <property type="entry name" value="OLFACTORY RECEPTOR"/>
    <property type="match status" value="1"/>
</dbReference>
<dbReference type="Pfam" id="PF13853">
    <property type="entry name" value="7tm_4"/>
    <property type="match status" value="1"/>
</dbReference>
<dbReference type="PRINTS" id="PR00237">
    <property type="entry name" value="GPCRRHODOPSN"/>
</dbReference>
<dbReference type="PRINTS" id="PR00245">
    <property type="entry name" value="OLFACTORYR"/>
</dbReference>
<dbReference type="SUPFAM" id="SSF81321">
    <property type="entry name" value="Family A G protein-coupled receptor-like"/>
    <property type="match status" value="1"/>
</dbReference>
<dbReference type="PROSITE" id="PS00237">
    <property type="entry name" value="G_PROTEIN_RECEP_F1_1"/>
    <property type="match status" value="1"/>
</dbReference>
<dbReference type="PROSITE" id="PS50262">
    <property type="entry name" value="G_PROTEIN_RECEP_F1_2"/>
    <property type="match status" value="1"/>
</dbReference>
<feature type="chain" id="PRO_0000150510" description="Olfactory receptor 2V2">
    <location>
        <begin position="1"/>
        <end position="315"/>
    </location>
</feature>
<feature type="topological domain" description="Extracellular" evidence="1">
    <location>
        <begin position="1"/>
        <end position="26"/>
    </location>
</feature>
<feature type="transmembrane region" description="Helical; Name=1" evidence="1">
    <location>
        <begin position="27"/>
        <end position="50"/>
    </location>
</feature>
<feature type="topological domain" description="Cytoplasmic" evidence="1">
    <location>
        <begin position="51"/>
        <end position="58"/>
    </location>
</feature>
<feature type="transmembrane region" description="Helical; Name=2" evidence="1">
    <location>
        <begin position="59"/>
        <end position="80"/>
    </location>
</feature>
<feature type="topological domain" description="Extracellular" evidence="1">
    <location>
        <begin position="81"/>
        <end position="101"/>
    </location>
</feature>
<feature type="transmembrane region" description="Helical; Name=3" evidence="1">
    <location>
        <begin position="102"/>
        <end position="121"/>
    </location>
</feature>
<feature type="topological domain" description="Cytoplasmic" evidence="1">
    <location>
        <begin position="122"/>
        <end position="140"/>
    </location>
</feature>
<feature type="transmembrane region" description="Helical; Name=4" evidence="1">
    <location>
        <begin position="141"/>
        <end position="159"/>
    </location>
</feature>
<feature type="topological domain" description="Extracellular" evidence="1">
    <location>
        <begin position="160"/>
        <end position="196"/>
    </location>
</feature>
<feature type="transmembrane region" description="Helical; Name=5" evidence="1">
    <location>
        <begin position="197"/>
        <end position="220"/>
    </location>
</feature>
<feature type="topological domain" description="Cytoplasmic" evidence="1">
    <location>
        <begin position="221"/>
        <end position="237"/>
    </location>
</feature>
<feature type="transmembrane region" description="Helical; Name=6" evidence="1">
    <location>
        <begin position="238"/>
        <end position="260"/>
    </location>
</feature>
<feature type="topological domain" description="Extracellular" evidence="1">
    <location>
        <begin position="261"/>
        <end position="273"/>
    </location>
</feature>
<feature type="transmembrane region" description="Helical; Name=7" evidence="1">
    <location>
        <begin position="274"/>
        <end position="293"/>
    </location>
</feature>
<feature type="topological domain" description="Cytoplasmic" evidence="1">
    <location>
        <begin position="294"/>
        <end position="315"/>
    </location>
</feature>
<feature type="glycosylation site" description="N-linked (GlcNAc...) asparagine" evidence="1">
    <location>
        <position position="6"/>
    </location>
</feature>
<feature type="disulfide bond" evidence="2">
    <location>
        <begin position="98"/>
        <end position="190"/>
    </location>
</feature>
<feature type="sequence variant" id="VAR_053160" description="In dbSNP:rs17617270.">
    <original>A</original>
    <variation>V</variation>
    <location>
        <position position="34"/>
    </location>
</feature>
<feature type="sequence variant" id="VAR_053161" description="In dbSNP:rs2546423." evidence="3">
    <original>H</original>
    <variation>R</variation>
    <location>
        <position position="221"/>
    </location>
</feature>
<organism>
    <name type="scientific">Homo sapiens</name>
    <name type="common">Human</name>
    <dbReference type="NCBI Taxonomy" id="9606"/>
    <lineage>
        <taxon>Eukaryota</taxon>
        <taxon>Metazoa</taxon>
        <taxon>Chordata</taxon>
        <taxon>Craniata</taxon>
        <taxon>Vertebrata</taxon>
        <taxon>Euteleostomi</taxon>
        <taxon>Mammalia</taxon>
        <taxon>Eutheria</taxon>
        <taxon>Euarchontoglires</taxon>
        <taxon>Primates</taxon>
        <taxon>Haplorrhini</taxon>
        <taxon>Catarrhini</taxon>
        <taxon>Hominidae</taxon>
        <taxon>Homo</taxon>
    </lineage>
</organism>
<gene>
    <name type="primary">OR2V2</name>
    <name type="synonym">OR2V3</name>
</gene>
<accession>Q96R30</accession>
<accession>Q6IFL6</accession>
<accession>Q8NGV1</accession>
<keyword id="KW-1003">Cell membrane</keyword>
<keyword id="KW-1015">Disulfide bond</keyword>
<keyword id="KW-0297">G-protein coupled receptor</keyword>
<keyword id="KW-0325">Glycoprotein</keyword>
<keyword id="KW-0472">Membrane</keyword>
<keyword id="KW-0552">Olfaction</keyword>
<keyword id="KW-0675">Receptor</keyword>
<keyword id="KW-1185">Reference proteome</keyword>
<keyword id="KW-0716">Sensory transduction</keyword>
<keyword id="KW-0807">Transducer</keyword>
<keyword id="KW-0812">Transmembrane</keyword>
<keyword id="KW-1133">Transmembrane helix</keyword>
<proteinExistence type="inferred from homology"/>
<name>OR2V2_HUMAN</name>
<evidence type="ECO:0000255" key="1"/>
<evidence type="ECO:0000255" key="2">
    <source>
        <dbReference type="PROSITE-ProRule" id="PRU00521"/>
    </source>
</evidence>
<evidence type="ECO:0000269" key="3">
    <source ref="1"/>
</evidence>
<evidence type="ECO:0000305" key="4"/>